<keyword id="KW-0574">Periplasm</keyword>
<keyword id="KW-0732">Signal</keyword>
<evidence type="ECO:0000255" key="1">
    <source>
        <dbReference type="HAMAP-Rule" id="MF_01068"/>
    </source>
</evidence>
<reference key="1">
    <citation type="journal article" date="2009" name="BMC Genomics">
        <title>Pseudogene accumulation in the evolutionary histories of Salmonella enterica serovars Paratyphi A and Typhi.</title>
        <authorList>
            <person name="Holt K.E."/>
            <person name="Thomson N.R."/>
            <person name="Wain J."/>
            <person name="Langridge G.C."/>
            <person name="Hasan R."/>
            <person name="Bhutta Z.A."/>
            <person name="Quail M.A."/>
            <person name="Norbertczak H."/>
            <person name="Walker D."/>
            <person name="Simmonds M."/>
            <person name="White B."/>
            <person name="Bason N."/>
            <person name="Mungall K."/>
            <person name="Dougan G."/>
            <person name="Parkhill J."/>
        </authorList>
    </citation>
    <scope>NUCLEOTIDE SEQUENCE [LARGE SCALE GENOMIC DNA]</scope>
    <source>
        <strain>AKU_12601</strain>
    </source>
</reference>
<organism>
    <name type="scientific">Salmonella paratyphi A (strain AKU_12601)</name>
    <dbReference type="NCBI Taxonomy" id="554290"/>
    <lineage>
        <taxon>Bacteria</taxon>
        <taxon>Pseudomonadati</taxon>
        <taxon>Pseudomonadota</taxon>
        <taxon>Gammaproteobacteria</taxon>
        <taxon>Enterobacterales</taxon>
        <taxon>Enterobacteriaceae</taxon>
        <taxon>Salmonella</taxon>
    </lineage>
</organism>
<name>OPGD_SALPK</name>
<protein>
    <recommendedName>
        <fullName evidence="1">Glucans biosynthesis protein D</fullName>
    </recommendedName>
</protein>
<feature type="signal peptide" description="Tat-type signal" evidence="1">
    <location>
        <begin position="1"/>
        <end position="32"/>
    </location>
</feature>
<feature type="chain" id="PRO_1000136602" description="Glucans biosynthesis protein D">
    <location>
        <begin position="33"/>
        <end position="551"/>
    </location>
</feature>
<comment type="function">
    <text evidence="1">Probably involved in the control of the structural glucose backbone of osmoregulated periplasmic glucans (OPGs).</text>
</comment>
<comment type="pathway">
    <text evidence="1">Glycan metabolism; osmoregulated periplasmic glucan (OPG) biosynthesis.</text>
</comment>
<comment type="subcellular location">
    <subcellularLocation>
        <location evidence="1">Periplasm</location>
    </subcellularLocation>
</comment>
<comment type="PTM">
    <text>Predicted to be exported by the Tat system. The position of the signal peptide cleavage has not been experimentally proven.</text>
</comment>
<comment type="similarity">
    <text evidence="1">Belongs to the OpgD/OpgG family.</text>
</comment>
<proteinExistence type="inferred from homology"/>
<dbReference type="EMBL" id="FM200053">
    <property type="protein sequence ID" value="CAR59318.1"/>
    <property type="molecule type" value="Genomic_DNA"/>
</dbReference>
<dbReference type="RefSeq" id="WP_001081950.1">
    <property type="nucleotide sequence ID" value="NC_011147.1"/>
</dbReference>
<dbReference type="SMR" id="B5BJ86"/>
<dbReference type="KEGG" id="sek:SSPA1156"/>
<dbReference type="HOGENOM" id="CLU_023403_2_0_6"/>
<dbReference type="UniPathway" id="UPA00637"/>
<dbReference type="Proteomes" id="UP000001869">
    <property type="component" value="Chromosome"/>
</dbReference>
<dbReference type="GO" id="GO:0030288">
    <property type="term" value="C:outer membrane-bounded periplasmic space"/>
    <property type="evidence" value="ECO:0007669"/>
    <property type="project" value="TreeGrafter"/>
</dbReference>
<dbReference type="GO" id="GO:0030246">
    <property type="term" value="F:carbohydrate binding"/>
    <property type="evidence" value="ECO:0007669"/>
    <property type="project" value="InterPro"/>
</dbReference>
<dbReference type="GO" id="GO:0003824">
    <property type="term" value="F:catalytic activity"/>
    <property type="evidence" value="ECO:0007669"/>
    <property type="project" value="InterPro"/>
</dbReference>
<dbReference type="GO" id="GO:0051274">
    <property type="term" value="P:beta-glucan biosynthetic process"/>
    <property type="evidence" value="ECO:0007669"/>
    <property type="project" value="TreeGrafter"/>
</dbReference>
<dbReference type="FunFam" id="2.60.40.10:FF:000379">
    <property type="entry name" value="Glucans biosynthesis protein D"/>
    <property type="match status" value="1"/>
</dbReference>
<dbReference type="Gene3D" id="2.70.98.10">
    <property type="match status" value="1"/>
</dbReference>
<dbReference type="Gene3D" id="2.60.40.10">
    <property type="entry name" value="Immunoglobulins"/>
    <property type="match status" value="1"/>
</dbReference>
<dbReference type="HAMAP" id="MF_01068">
    <property type="entry name" value="MdoD_OpgD"/>
    <property type="match status" value="1"/>
</dbReference>
<dbReference type="InterPro" id="IPR011013">
    <property type="entry name" value="Gal_mutarotase_sf_dom"/>
</dbReference>
<dbReference type="InterPro" id="IPR014718">
    <property type="entry name" value="GH-type_carb-bd"/>
</dbReference>
<dbReference type="InterPro" id="IPR023724">
    <property type="entry name" value="Glucan_biosyn_MdoD"/>
</dbReference>
<dbReference type="InterPro" id="IPR014438">
    <property type="entry name" value="Glucan_biosyn_MdoG/MdoD"/>
</dbReference>
<dbReference type="InterPro" id="IPR007444">
    <property type="entry name" value="Glucan_biosyn_MdoG_C"/>
</dbReference>
<dbReference type="InterPro" id="IPR013783">
    <property type="entry name" value="Ig-like_fold"/>
</dbReference>
<dbReference type="InterPro" id="IPR014756">
    <property type="entry name" value="Ig_E-set"/>
</dbReference>
<dbReference type="InterPro" id="IPR006311">
    <property type="entry name" value="TAT_signal"/>
</dbReference>
<dbReference type="InterPro" id="IPR019546">
    <property type="entry name" value="TAT_signal_bac_arc"/>
</dbReference>
<dbReference type="NCBIfam" id="TIGR01409">
    <property type="entry name" value="TAT_signal_seq"/>
    <property type="match status" value="1"/>
</dbReference>
<dbReference type="PANTHER" id="PTHR30504">
    <property type="entry name" value="GLUCANS BIOSYNTHESIS PROTEIN"/>
    <property type="match status" value="1"/>
</dbReference>
<dbReference type="PANTHER" id="PTHR30504:SF3">
    <property type="entry name" value="GLUCANS BIOSYNTHESIS PROTEIN D"/>
    <property type="match status" value="1"/>
</dbReference>
<dbReference type="Pfam" id="PF04349">
    <property type="entry name" value="MdoG"/>
    <property type="match status" value="1"/>
</dbReference>
<dbReference type="PIRSF" id="PIRSF006281">
    <property type="entry name" value="MdoG"/>
    <property type="match status" value="1"/>
</dbReference>
<dbReference type="SUPFAM" id="SSF81296">
    <property type="entry name" value="E set domains"/>
    <property type="match status" value="1"/>
</dbReference>
<dbReference type="SUPFAM" id="SSF74650">
    <property type="entry name" value="Galactose mutarotase-like"/>
    <property type="match status" value="1"/>
</dbReference>
<dbReference type="PROSITE" id="PS51318">
    <property type="entry name" value="TAT"/>
    <property type="match status" value="1"/>
</dbReference>
<accession>B5BJ86</accession>
<sequence>MNRRRFIKGSMAMAAVCGSSGIASLFSQAAFAAESDIADGKIVRFDFAGLQSMAQALAKKPWGGAPGPLPDTLANLTPQAYNSIQYDAAHSLWNGVANRQLDIQFFHVGMGFRRRVRMFSVDTTTHLAREIHFRPELFKYNDAGVDTTQLEGQSDLGFAGFRVFKAPELARRDVVSFLGASYFRAVDDTYQYGLSARGLAIDTYTDGQEEFPDFTAFWFDTAKPGDTTFTVYALLDSASVTGAYKFVIHCEKTQVIMDVENHLYARKDIKQLGIAPMTSMFSCGNNERRVCDTIHPQIHDSDRLAMWRGNGEWICRPLNNPQKLQFNAYMDDNPKGFGLLQLDRDFSHYQDVMDWYNKRPSLWVEPRSKWGKGAVSLMEIPTTGETLDNVVCFWQPEKAIKAGDTLVFNYRLYWSAQPPVQSPLARVMATRTGMGGFPEGWAPGEHYPDKWARRFAIDFVGGDLKAAAPKSIEPVITLSSGEAKQVEILYVEPFDGYRIQFDWYPTSDSTAPVDMRMFLRCQGEAISETWLYQYFPPAPDKRRYVDDRIMR</sequence>
<gene>
    <name evidence="1" type="primary">mdoD</name>
    <name evidence="1" type="synonym">opgD</name>
    <name type="ordered locus">SSPA1156</name>
</gene>